<protein>
    <recommendedName>
        <fullName evidence="3">Carbamoyl phosphate synthase large chain, C-terminal section</fullName>
        <ecNumber evidence="1">6.3.4.16</ecNumber>
        <ecNumber evidence="1">6.3.5.5</ecNumber>
    </recommendedName>
    <alternativeName>
        <fullName>Carbamoyl phosphate synthetase ammonia chain</fullName>
    </alternativeName>
</protein>
<keyword id="KW-0028">Amino-acid biosynthesis</keyword>
<keyword id="KW-0055">Arginine biosynthesis</keyword>
<keyword id="KW-0067">ATP-binding</keyword>
<keyword id="KW-0436">Ligase</keyword>
<keyword id="KW-0460">Magnesium</keyword>
<keyword id="KW-0464">Manganese</keyword>
<keyword id="KW-0479">Metal-binding</keyword>
<keyword id="KW-0547">Nucleotide-binding</keyword>
<keyword id="KW-0665">Pyrimidine biosynthesis</keyword>
<keyword id="KW-1185">Reference proteome</keyword>
<dbReference type="EC" id="6.3.4.16" evidence="1"/>
<dbReference type="EC" id="6.3.5.5" evidence="1"/>
<dbReference type="EMBL" id="AE000657">
    <property type="protein sequence ID" value="AAC07203.1"/>
    <property type="molecule type" value="Genomic_DNA"/>
</dbReference>
<dbReference type="PIR" id="F70400">
    <property type="entry name" value="F70400"/>
</dbReference>
<dbReference type="RefSeq" id="NP_213797.1">
    <property type="nucleotide sequence ID" value="NC_000918.1"/>
</dbReference>
<dbReference type="RefSeq" id="WP_010880735.1">
    <property type="nucleotide sequence ID" value="NC_000918.1"/>
</dbReference>
<dbReference type="SMR" id="O67233"/>
<dbReference type="STRING" id="224324.aq_1172"/>
<dbReference type="EnsemblBacteria" id="AAC07203">
    <property type="protein sequence ID" value="AAC07203"/>
    <property type="gene ID" value="aq_1172"/>
</dbReference>
<dbReference type="KEGG" id="aae:aq_1172"/>
<dbReference type="PATRIC" id="fig|224324.8.peg.911"/>
<dbReference type="eggNOG" id="COG0458">
    <property type="taxonomic scope" value="Bacteria"/>
</dbReference>
<dbReference type="HOGENOM" id="CLU_000513_3_4_0"/>
<dbReference type="InParanoid" id="O67233"/>
<dbReference type="OrthoDB" id="9804197at2"/>
<dbReference type="UniPathway" id="UPA00068">
    <property type="reaction ID" value="UER00171"/>
</dbReference>
<dbReference type="UniPathway" id="UPA00070">
    <property type="reaction ID" value="UER00115"/>
</dbReference>
<dbReference type="Proteomes" id="UP000000798">
    <property type="component" value="Chromosome"/>
</dbReference>
<dbReference type="GO" id="GO:0005524">
    <property type="term" value="F:ATP binding"/>
    <property type="evidence" value="ECO:0007669"/>
    <property type="project" value="UniProtKB-KW"/>
</dbReference>
<dbReference type="GO" id="GO:0004087">
    <property type="term" value="F:carbamoyl-phosphate synthase (ammonia) activity"/>
    <property type="evidence" value="ECO:0007669"/>
    <property type="project" value="RHEA"/>
</dbReference>
<dbReference type="GO" id="GO:0004088">
    <property type="term" value="F:carbamoyl-phosphate synthase (glutamine-hydrolyzing) activity"/>
    <property type="evidence" value="ECO:0007669"/>
    <property type="project" value="UniProtKB-EC"/>
</dbReference>
<dbReference type="GO" id="GO:0046872">
    <property type="term" value="F:metal ion binding"/>
    <property type="evidence" value="ECO:0007669"/>
    <property type="project" value="UniProtKB-KW"/>
</dbReference>
<dbReference type="GO" id="GO:0044205">
    <property type="term" value="P:'de novo' UMP biosynthetic process"/>
    <property type="evidence" value="ECO:0007669"/>
    <property type="project" value="UniProtKB-UniPathway"/>
</dbReference>
<dbReference type="GO" id="GO:0006526">
    <property type="term" value="P:L-arginine biosynthetic process"/>
    <property type="evidence" value="ECO:0007669"/>
    <property type="project" value="UniProtKB-UniPathway"/>
</dbReference>
<dbReference type="CDD" id="cd01424">
    <property type="entry name" value="MGS_CPS_II"/>
    <property type="match status" value="1"/>
</dbReference>
<dbReference type="FunFam" id="3.30.1490.20:FF:000001">
    <property type="entry name" value="Carbamoyl-phosphate synthase large chain"/>
    <property type="match status" value="1"/>
</dbReference>
<dbReference type="FunFam" id="3.30.470.20:FF:000013">
    <property type="entry name" value="Carbamoyl-phosphate synthase large chain"/>
    <property type="match status" value="1"/>
</dbReference>
<dbReference type="FunFam" id="3.40.50.1380:FF:000013">
    <property type="entry name" value="Carbamoyl-phosphate synthase large chain"/>
    <property type="match status" value="1"/>
</dbReference>
<dbReference type="FunFam" id="3.40.50.20:FF:000002">
    <property type="entry name" value="Carbamoyl-phosphate synthase large chain"/>
    <property type="match status" value="1"/>
</dbReference>
<dbReference type="Gene3D" id="3.40.50.20">
    <property type="match status" value="1"/>
</dbReference>
<dbReference type="Gene3D" id="3.30.470.20">
    <property type="entry name" value="ATP-grasp fold, B domain"/>
    <property type="match status" value="1"/>
</dbReference>
<dbReference type="Gene3D" id="3.40.50.1380">
    <property type="entry name" value="Methylglyoxal synthase-like domain"/>
    <property type="match status" value="1"/>
</dbReference>
<dbReference type="InterPro" id="IPR011761">
    <property type="entry name" value="ATP-grasp"/>
</dbReference>
<dbReference type="InterPro" id="IPR005479">
    <property type="entry name" value="CbamoylP_synth_lsu-like_ATP-bd"/>
</dbReference>
<dbReference type="InterPro" id="IPR005483">
    <property type="entry name" value="CbamoylP_synth_lsu_CPSase_dom"/>
</dbReference>
<dbReference type="InterPro" id="IPR011607">
    <property type="entry name" value="MGS-like_dom"/>
</dbReference>
<dbReference type="InterPro" id="IPR036914">
    <property type="entry name" value="MGS-like_dom_sf"/>
</dbReference>
<dbReference type="InterPro" id="IPR033937">
    <property type="entry name" value="MGS_CPS_CarB"/>
</dbReference>
<dbReference type="InterPro" id="IPR016185">
    <property type="entry name" value="PreATP-grasp_dom_sf"/>
</dbReference>
<dbReference type="NCBIfam" id="NF003671">
    <property type="entry name" value="PRK05294.1"/>
    <property type="match status" value="1"/>
</dbReference>
<dbReference type="PANTHER" id="PTHR11405:SF53">
    <property type="entry name" value="CARBAMOYL-PHOSPHATE SYNTHASE [AMMONIA], MITOCHONDRIAL"/>
    <property type="match status" value="1"/>
</dbReference>
<dbReference type="PANTHER" id="PTHR11405">
    <property type="entry name" value="CARBAMOYLTRANSFERASE FAMILY MEMBER"/>
    <property type="match status" value="1"/>
</dbReference>
<dbReference type="Pfam" id="PF02786">
    <property type="entry name" value="CPSase_L_D2"/>
    <property type="match status" value="1"/>
</dbReference>
<dbReference type="Pfam" id="PF02142">
    <property type="entry name" value="MGS"/>
    <property type="match status" value="1"/>
</dbReference>
<dbReference type="PRINTS" id="PR00098">
    <property type="entry name" value="CPSASE"/>
</dbReference>
<dbReference type="SMART" id="SM00851">
    <property type="entry name" value="MGS"/>
    <property type="match status" value="1"/>
</dbReference>
<dbReference type="SUPFAM" id="SSF56059">
    <property type="entry name" value="Glutathione synthetase ATP-binding domain-like"/>
    <property type="match status" value="1"/>
</dbReference>
<dbReference type="SUPFAM" id="SSF52335">
    <property type="entry name" value="Methylglyoxal synthase-like"/>
    <property type="match status" value="1"/>
</dbReference>
<dbReference type="SUPFAM" id="SSF52440">
    <property type="entry name" value="PreATP-grasp domain"/>
    <property type="match status" value="1"/>
</dbReference>
<dbReference type="PROSITE" id="PS50975">
    <property type="entry name" value="ATP_GRASP"/>
    <property type="match status" value="1"/>
</dbReference>
<dbReference type="PROSITE" id="PS00866">
    <property type="entry name" value="CPSASE_1"/>
    <property type="match status" value="1"/>
</dbReference>
<dbReference type="PROSITE" id="PS00867">
    <property type="entry name" value="CPSASE_2"/>
    <property type="match status" value="1"/>
</dbReference>
<dbReference type="PROSITE" id="PS51855">
    <property type="entry name" value="MGS"/>
    <property type="match status" value="1"/>
</dbReference>
<organism>
    <name type="scientific">Aquifex aeolicus (strain VF5)</name>
    <dbReference type="NCBI Taxonomy" id="224324"/>
    <lineage>
        <taxon>Bacteria</taxon>
        <taxon>Pseudomonadati</taxon>
        <taxon>Aquificota</taxon>
        <taxon>Aquificia</taxon>
        <taxon>Aquificales</taxon>
        <taxon>Aquificaceae</taxon>
        <taxon>Aquifex</taxon>
    </lineage>
</organism>
<name>CARB2_AQUAE</name>
<proteinExistence type="inferred from homology"/>
<accession>O67233</accession>
<feature type="chain" id="PRO_0000144985" description="Carbamoyl phosphate synthase large chain, C-terminal section">
    <location>
        <begin position="1"/>
        <end position="537"/>
    </location>
</feature>
<feature type="domain" description="ATP-grasp" evidence="1">
    <location>
        <begin position="122"/>
        <end position="313"/>
    </location>
</feature>
<feature type="domain" description="MGS-like" evidence="1">
    <location>
        <begin position="396"/>
        <end position="537"/>
    </location>
</feature>
<feature type="region of interest" description="Carbamoyl phosphate synthetic domain" evidence="1">
    <location>
        <begin position="1"/>
        <end position="395"/>
    </location>
</feature>
<feature type="region of interest" description="Allosteric domain" evidence="1">
    <location>
        <begin position="396"/>
        <end position="537"/>
    </location>
</feature>
<feature type="binding site" evidence="1">
    <location>
        <position position="158"/>
    </location>
    <ligand>
        <name>ATP</name>
        <dbReference type="ChEBI" id="CHEBI:30616"/>
        <label>1</label>
    </ligand>
</feature>
<feature type="binding site" evidence="1">
    <location>
        <position position="197"/>
    </location>
    <ligand>
        <name>ATP</name>
        <dbReference type="ChEBI" id="CHEBI:30616"/>
        <label>1</label>
    </ligand>
</feature>
<feature type="binding site" evidence="1">
    <location>
        <position position="199"/>
    </location>
    <ligand>
        <name>ATP</name>
        <dbReference type="ChEBI" id="CHEBI:30616"/>
        <label>1</label>
    </ligand>
</feature>
<feature type="binding site" evidence="1">
    <location>
        <position position="204"/>
    </location>
    <ligand>
        <name>ATP</name>
        <dbReference type="ChEBI" id="CHEBI:30616"/>
        <label>1</label>
    </ligand>
</feature>
<feature type="binding site" evidence="1">
    <location>
        <position position="229"/>
    </location>
    <ligand>
        <name>ATP</name>
        <dbReference type="ChEBI" id="CHEBI:30616"/>
        <label>1</label>
    </ligand>
</feature>
<feature type="binding site" evidence="1">
    <location>
        <position position="230"/>
    </location>
    <ligand>
        <name>ATP</name>
        <dbReference type="ChEBI" id="CHEBI:30616"/>
        <label>1</label>
    </ligand>
</feature>
<feature type="binding site" evidence="1">
    <location>
        <position position="231"/>
    </location>
    <ligand>
        <name>ATP</name>
        <dbReference type="ChEBI" id="CHEBI:30616"/>
        <label>1</label>
    </ligand>
</feature>
<feature type="binding site" evidence="1">
    <location>
        <position position="232"/>
    </location>
    <ligand>
        <name>ATP</name>
        <dbReference type="ChEBI" id="CHEBI:30616"/>
        <label>1</label>
    </ligand>
</feature>
<feature type="binding site" evidence="1">
    <location>
        <position position="272"/>
    </location>
    <ligand>
        <name>ATP</name>
        <dbReference type="ChEBI" id="CHEBI:30616"/>
        <label>1</label>
    </ligand>
</feature>
<feature type="binding site" evidence="2">
    <location>
        <position position="272"/>
    </location>
    <ligand>
        <name>Mg(2+)</name>
        <dbReference type="ChEBI" id="CHEBI:18420"/>
        <label>1</label>
    </ligand>
</feature>
<feature type="binding site" evidence="2">
    <location>
        <position position="272"/>
    </location>
    <ligand>
        <name>Mn(2+)</name>
        <dbReference type="ChEBI" id="CHEBI:29035"/>
        <label>1</label>
    </ligand>
</feature>
<feature type="binding site" evidence="1">
    <location>
        <position position="284"/>
    </location>
    <ligand>
        <name>ATP</name>
        <dbReference type="ChEBI" id="CHEBI:30616"/>
        <label>1</label>
    </ligand>
</feature>
<feature type="binding site" evidence="2">
    <location>
        <position position="284"/>
    </location>
    <ligand>
        <name>Mg(2+)</name>
        <dbReference type="ChEBI" id="CHEBI:18420"/>
        <label>1</label>
    </ligand>
</feature>
<feature type="binding site" evidence="2">
    <location>
        <position position="284"/>
    </location>
    <ligand>
        <name>Mg(2+)</name>
        <dbReference type="ChEBI" id="CHEBI:18420"/>
        <label>2</label>
    </ligand>
</feature>
<feature type="binding site" evidence="2">
    <location>
        <position position="284"/>
    </location>
    <ligand>
        <name>Mn(2+)</name>
        <dbReference type="ChEBI" id="CHEBI:29035"/>
        <label>1</label>
    </ligand>
</feature>
<feature type="binding site" evidence="2">
    <location>
        <position position="284"/>
    </location>
    <ligand>
        <name>Mn(2+)</name>
        <dbReference type="ChEBI" id="CHEBI:29035"/>
        <label>2</label>
    </ligand>
</feature>
<feature type="binding site" evidence="2">
    <location>
        <position position="286"/>
    </location>
    <ligand>
        <name>Mg(2+)</name>
        <dbReference type="ChEBI" id="CHEBI:18420"/>
        <label>2</label>
    </ligand>
</feature>
<feature type="binding site" evidence="2">
    <location>
        <position position="286"/>
    </location>
    <ligand>
        <name>Mn(2+)</name>
        <dbReference type="ChEBI" id="CHEBI:29035"/>
        <label>2</label>
    </ligand>
</feature>
<evidence type="ECO:0000250" key="1">
    <source>
        <dbReference type="UniProtKB" id="P00968"/>
    </source>
</evidence>
<evidence type="ECO:0000255" key="2">
    <source>
        <dbReference type="PROSITE-ProRule" id="PRU00409"/>
    </source>
</evidence>
<evidence type="ECO:0000305" key="3"/>
<reference key="1">
    <citation type="journal article" date="1998" name="Nature">
        <title>The complete genome of the hyperthermophilic bacterium Aquifex aeolicus.</title>
        <authorList>
            <person name="Deckert G."/>
            <person name="Warren P.V."/>
            <person name="Gaasterland T."/>
            <person name="Young W.G."/>
            <person name="Lenox A.L."/>
            <person name="Graham D.E."/>
            <person name="Overbeek R."/>
            <person name="Snead M.A."/>
            <person name="Keller M."/>
            <person name="Aujay M."/>
            <person name="Huber R."/>
            <person name="Feldman R.A."/>
            <person name="Short J.M."/>
            <person name="Olsen G.J."/>
            <person name="Swanson R.V."/>
        </authorList>
    </citation>
    <scope>NUCLEOTIDE SEQUENCE [LARGE SCALE GENOMIC DNA]</scope>
    <source>
        <strain>VF5</strain>
    </source>
</reference>
<comment type="function">
    <text evidence="1">Large subunit of the glutamine-dependent carbamoyl phosphate synthetase (CPSase). CPSase catalyzes the formation of carbamoyl phosphate from the ammonia moiety of glutamine, carbonate, and phosphate donated by ATP, constituting the first step of 2 biosynthetic pathways, one leading to arginine and/or urea and the other to pyrimidine nucleotides. The large subunit (synthetase) binds the substrates ammonia (free or transferred from glutamine from the small subunit), hydrogencarbonate and ATP and carries out an ATP-coupled ligase reaction, activating hydrogencarbonate by forming carboxy phosphate which reacts with ammonia to form carbamoyl phosphate.</text>
</comment>
<comment type="catalytic activity">
    <reaction evidence="1">
        <text>hydrogencarbonate + L-glutamine + 2 ATP + H2O = carbamoyl phosphate + L-glutamate + 2 ADP + phosphate + 2 H(+)</text>
        <dbReference type="Rhea" id="RHEA:18633"/>
        <dbReference type="ChEBI" id="CHEBI:15377"/>
        <dbReference type="ChEBI" id="CHEBI:15378"/>
        <dbReference type="ChEBI" id="CHEBI:17544"/>
        <dbReference type="ChEBI" id="CHEBI:29985"/>
        <dbReference type="ChEBI" id="CHEBI:30616"/>
        <dbReference type="ChEBI" id="CHEBI:43474"/>
        <dbReference type="ChEBI" id="CHEBI:58228"/>
        <dbReference type="ChEBI" id="CHEBI:58359"/>
        <dbReference type="ChEBI" id="CHEBI:456216"/>
        <dbReference type="EC" id="6.3.5.5"/>
    </reaction>
</comment>
<comment type="catalytic activity">
    <reaction evidence="1">
        <text>hydrogencarbonate + NH4(+) + 2 ATP = carbamoyl phosphate + 2 ADP + phosphate + 2 H(+)</text>
        <dbReference type="Rhea" id="RHEA:18029"/>
        <dbReference type="ChEBI" id="CHEBI:15378"/>
        <dbReference type="ChEBI" id="CHEBI:17544"/>
        <dbReference type="ChEBI" id="CHEBI:28938"/>
        <dbReference type="ChEBI" id="CHEBI:30616"/>
        <dbReference type="ChEBI" id="CHEBI:43474"/>
        <dbReference type="ChEBI" id="CHEBI:58228"/>
        <dbReference type="ChEBI" id="CHEBI:456216"/>
        <dbReference type="EC" id="6.3.4.16"/>
    </reaction>
</comment>
<comment type="cofactor">
    <cofactor evidence="1">
        <name>Mg(2+)</name>
        <dbReference type="ChEBI" id="CHEBI:18420"/>
    </cofactor>
    <cofactor evidence="1">
        <name>Mn(2+)</name>
        <dbReference type="ChEBI" id="CHEBI:29035"/>
    </cofactor>
    <text evidence="3">Binds 2 Mg(2+) or Mn(2+) ions per subunit.</text>
</comment>
<comment type="pathway">
    <text evidence="1">Amino-acid biosynthesis; L-arginine biosynthesis; carbamoyl phosphate from bicarbonate: step 1/1.</text>
</comment>
<comment type="pathway">
    <text evidence="1">Pyrimidine metabolism; UMP biosynthesis via de novo pathway; (S)-dihydroorotate from bicarbonate: step 1/3.</text>
</comment>
<comment type="subunit">
    <text evidence="1">Composed of two chains; the small (or glutamine) chain promotes the hydrolysis of glutamine to ammonia, which is used by the large (or ammonia) chain to synthesize carbamoyl phosphate. Tetramer of heterodimers (alpha,beta)4.</text>
</comment>
<comment type="domain">
    <text evidence="3">Corresponds to the C-terminal section.</text>
</comment>
<comment type="domain">
    <text evidence="1">The large subunit is composed of 2 ATP-grasp domains that are involved in binding the 2 ATP molecules needed for carbamoyl phosphate synthesis. The N-terminal ATP-grasp domain (referred to as the carboxyphosphate synthetic component) catalyzes the ATP-dependent phosphorylation of hydrogencarbonate to carboxyphosphate and the subsequent nucleophilic attack by ammonia to form a carbamate intermediate. The C-terminal ATP-grasp domain (referred to as the carbamoyl phosphate synthetic component) then catalyzes the phosphorylation of carbamate with the second ATP to form the end product carbamoyl phosphate. The reactive and unstable enzyme intermediates are sequentially channeled from one active site to the next through the interior of the protein over a distance of at least 96 A.</text>
</comment>
<comment type="similarity">
    <text evidence="3">Belongs to the CarB family.</text>
</comment>
<comment type="caution">
    <text evidence="3">CarB is split into two genes in A.aeolicus (AQ_1172 and AQ_2101).</text>
</comment>
<sequence length="537" mass="60037">MSKKVVILGSGPNRIGQGIEFDYACVHAVFSLQEEGYYAVMVNCNPETVSTDYDTADKLYFEPIVFEHVMDIIEREKPEGVILQFGGQTPLKLALPLQKNGVKILGTKPESIDKAEDRELFRELIIELGLKQPPSGTARTKEEALKIAKEIGFPVLVRPSYVLGGRAMRIVYDEEELKEYLEEAVSVSHERPVLIDKFLDNSIELDVDAVSDGKDVLIGAVMEHIEEAGVHSGDSATSIPPYSLSKEIVEEVKEQTRKLAVALEVKGLINVQYAVQNNEVYVLEVNPRASRTVPFVSKSIGYPLAKIATKVAIGKSLREILPEVFERLEKGEAHFASDFLPKEKKIFSVKEVVFPWKRFPEVDPILGPEMKSTGEVMGIDKEFGLAYYKAQLSAGYRLPEKGNLFISVADRDKPKILELAKEFEKLGFGIYATSGTYKFLKEHGVNAKRVLKVSEGRPNVVDMIINGEIHLVINTPSGKREKSDAYYIRRACVQFNVPYYTTMRAGYAVLEAIKSIKKLKEEGKGLSVHSLQEIYNI</sequence>
<gene>
    <name type="primary">carB2</name>
    <name type="ordered locus">aq_1172</name>
</gene>